<organism>
    <name type="scientific">Saccharomyces cerevisiae (strain ATCC 204508 / S288c)</name>
    <name type="common">Baker's yeast</name>
    <dbReference type="NCBI Taxonomy" id="559292"/>
    <lineage>
        <taxon>Eukaryota</taxon>
        <taxon>Fungi</taxon>
        <taxon>Dikarya</taxon>
        <taxon>Ascomycota</taxon>
        <taxon>Saccharomycotina</taxon>
        <taxon>Saccharomycetes</taxon>
        <taxon>Saccharomycetales</taxon>
        <taxon>Saccharomycetaceae</taxon>
        <taxon>Saccharomyces</taxon>
    </lineage>
</organism>
<feature type="chain" id="PRO_0000203365" description="Essential for maintenance of the cell wall protein 1">
    <location>
        <begin position="1"/>
        <end position="904"/>
    </location>
</feature>
<feature type="repeat" description="TPR 1">
    <location>
        <begin position="510"/>
        <end position="544"/>
    </location>
</feature>
<feature type="repeat" description="TPR 2">
    <location>
        <begin position="563"/>
        <end position="596"/>
    </location>
</feature>
<feature type="repeat" description="TPR 3">
    <location>
        <begin position="603"/>
        <end position="636"/>
    </location>
</feature>
<feature type="repeat" description="TPR 4">
    <location>
        <begin position="637"/>
        <end position="670"/>
    </location>
</feature>
<feature type="repeat" description="TPR 5">
    <location>
        <begin position="671"/>
        <end position="704"/>
    </location>
</feature>
<feature type="repeat" description="TPR 6">
    <location>
        <begin position="706"/>
        <end position="739"/>
    </location>
</feature>
<gene>
    <name type="primary">EMW1</name>
    <name type="ordered locus">YNL313C</name>
    <name type="ORF">N0364</name>
</gene>
<proteinExistence type="evidence at protein level"/>
<name>EMW1_YEAST</name>
<evidence type="ECO:0000269" key="1">
    <source>
    </source>
</evidence>
<evidence type="ECO:0000269" key="2">
    <source>
    </source>
</evidence>
<evidence type="ECO:0000269" key="3">
    <source>
    </source>
</evidence>
<evidence type="ECO:0000269" key="4">
    <source>
    </source>
</evidence>
<evidence type="ECO:0000305" key="5"/>
<comment type="function">
    <text evidence="4">Required for the maintenance of the cell wall integrity.</text>
</comment>
<comment type="interaction">
    <interactant intactId="EBI-28374">
        <id>P42842</id>
    </interactant>
    <interactant intactId="EBI-6333">
        <id>P32324</id>
        <label>EFT2</label>
    </interactant>
    <organismsDiffer>false</organismsDiffer>
    <experiments>4</experiments>
</comment>
<comment type="subcellular location">
    <subcellularLocation>
        <location evidence="3">Cytoplasm</location>
    </subcellularLocation>
    <subcellularLocation>
        <location evidence="3">Nucleus</location>
    </subcellularLocation>
</comment>
<comment type="induction">
    <text evidence="1">Target of SBF and MBF transcription factor complexes that activate gene expression during the G1/S transition of the cell cycle.</text>
</comment>
<comment type="miscellaneous">
    <text evidence="2">Present with 8070 molecules/cell in log phase SD medium.</text>
</comment>
<comment type="similarity">
    <text evidence="5">Belongs to the TTC27 family.</text>
</comment>
<keyword id="KW-0961">Cell wall biogenesis/degradation</keyword>
<keyword id="KW-0963">Cytoplasm</keyword>
<keyword id="KW-0539">Nucleus</keyword>
<keyword id="KW-1185">Reference proteome</keyword>
<keyword id="KW-0677">Repeat</keyword>
<keyword id="KW-0802">TPR repeat</keyword>
<dbReference type="EMBL" id="Z46259">
    <property type="protein sequence ID" value="CAA86383.1"/>
    <property type="molecule type" value="Genomic_DNA"/>
</dbReference>
<dbReference type="EMBL" id="Z71588">
    <property type="protein sequence ID" value="CAA96242.1"/>
    <property type="molecule type" value="Genomic_DNA"/>
</dbReference>
<dbReference type="EMBL" id="Z71589">
    <property type="protein sequence ID" value="CAA96243.1"/>
    <property type="molecule type" value="Genomic_DNA"/>
</dbReference>
<dbReference type="EMBL" id="BK006947">
    <property type="protein sequence ID" value="DAA10248.1"/>
    <property type="molecule type" value="Genomic_DNA"/>
</dbReference>
<dbReference type="PIR" id="S51299">
    <property type="entry name" value="S51299"/>
</dbReference>
<dbReference type="RefSeq" id="NP_014086.1">
    <property type="nucleotide sequence ID" value="NM_001183151.1"/>
</dbReference>
<dbReference type="SMR" id="P42842"/>
<dbReference type="BioGRID" id="35526">
    <property type="interactions" value="66"/>
</dbReference>
<dbReference type="DIP" id="DIP-6783N"/>
<dbReference type="FunCoup" id="P42842">
    <property type="interactions" value="1414"/>
</dbReference>
<dbReference type="IntAct" id="P42842">
    <property type="interactions" value="20"/>
</dbReference>
<dbReference type="MINT" id="P42842"/>
<dbReference type="STRING" id="4932.YNL313C"/>
<dbReference type="GlyGen" id="P42842">
    <property type="glycosylation" value="1 site"/>
</dbReference>
<dbReference type="iPTMnet" id="P42842"/>
<dbReference type="PaxDb" id="4932-YNL313C"/>
<dbReference type="PeptideAtlas" id="P42842"/>
<dbReference type="EnsemblFungi" id="YNL313C_mRNA">
    <property type="protein sequence ID" value="YNL313C"/>
    <property type="gene ID" value="YNL313C"/>
</dbReference>
<dbReference type="GeneID" id="855403"/>
<dbReference type="KEGG" id="sce:YNL313C"/>
<dbReference type="AGR" id="SGD:S000005257"/>
<dbReference type="SGD" id="S000005257">
    <property type="gene designation" value="EMW1"/>
</dbReference>
<dbReference type="VEuPathDB" id="FungiDB:YNL313C"/>
<dbReference type="eggNOG" id="KOG1128">
    <property type="taxonomic scope" value="Eukaryota"/>
</dbReference>
<dbReference type="GeneTree" id="ENSGT00500000044929"/>
<dbReference type="HOGENOM" id="CLU_004905_0_1_1"/>
<dbReference type="InParanoid" id="P42842"/>
<dbReference type="OMA" id="WNIRLIC"/>
<dbReference type="OrthoDB" id="1936594at2759"/>
<dbReference type="BioCyc" id="YEAST:G3O-33300-MONOMER"/>
<dbReference type="BioGRID-ORCS" id="855403">
    <property type="hits" value="1 hit in 10 CRISPR screens"/>
</dbReference>
<dbReference type="CD-CODE" id="E03F929F">
    <property type="entry name" value="Stress granule"/>
</dbReference>
<dbReference type="PRO" id="PR:P42842"/>
<dbReference type="Proteomes" id="UP000002311">
    <property type="component" value="Chromosome XIV"/>
</dbReference>
<dbReference type="RNAct" id="P42842">
    <property type="molecule type" value="protein"/>
</dbReference>
<dbReference type="GO" id="GO:0005737">
    <property type="term" value="C:cytoplasm"/>
    <property type="evidence" value="ECO:0000314"/>
    <property type="project" value="SGD"/>
</dbReference>
<dbReference type="GO" id="GO:0005634">
    <property type="term" value="C:nucleus"/>
    <property type="evidence" value="ECO:0000314"/>
    <property type="project" value="SGD"/>
</dbReference>
<dbReference type="GO" id="GO:0031505">
    <property type="term" value="P:fungal-type cell wall organization"/>
    <property type="evidence" value="ECO:0000315"/>
    <property type="project" value="SGD"/>
</dbReference>
<dbReference type="FunFam" id="1.25.40.10:FF:000884">
    <property type="entry name" value="TPR repeat-containing protein C19B12.01"/>
    <property type="match status" value="1"/>
</dbReference>
<dbReference type="Gene3D" id="1.25.40.10">
    <property type="entry name" value="Tetratricopeptide repeat domain"/>
    <property type="match status" value="1"/>
</dbReference>
<dbReference type="InterPro" id="IPR011990">
    <property type="entry name" value="TPR-like_helical_dom_sf"/>
</dbReference>
<dbReference type="InterPro" id="IPR019734">
    <property type="entry name" value="TPR_rpt"/>
</dbReference>
<dbReference type="InterPro" id="IPR044244">
    <property type="entry name" value="TTC27/Emw1"/>
</dbReference>
<dbReference type="PANTHER" id="PTHR16193">
    <property type="entry name" value="TETRATRICOPEPTIDE REPEAT PROTEIN 27"/>
    <property type="match status" value="1"/>
</dbReference>
<dbReference type="PANTHER" id="PTHR16193:SF0">
    <property type="entry name" value="TETRATRICOPEPTIDE REPEAT PROTEIN 27"/>
    <property type="match status" value="1"/>
</dbReference>
<dbReference type="Pfam" id="PF13181">
    <property type="entry name" value="TPR_8"/>
    <property type="match status" value="2"/>
</dbReference>
<dbReference type="SMART" id="SM00028">
    <property type="entry name" value="TPR"/>
    <property type="match status" value="3"/>
</dbReference>
<dbReference type="SUPFAM" id="SSF48452">
    <property type="entry name" value="TPR-like"/>
    <property type="match status" value="1"/>
</dbReference>
<dbReference type="PROSITE" id="PS50005">
    <property type="entry name" value="TPR"/>
    <property type="match status" value="2"/>
</dbReference>
<dbReference type="PROSITE" id="PS50293">
    <property type="entry name" value="TPR_REGION"/>
    <property type="match status" value="1"/>
</dbReference>
<protein>
    <recommendedName>
        <fullName>Essential for maintenance of the cell wall protein 1</fullName>
    </recommendedName>
</protein>
<sequence>METLLHAKLLLSAEVESLKSGSFDQTYVKKAEHIISGESYQLVQQFVDKFKGKISISGEISTSSVIAALNDFLNVEVFKMGQENEMLFLAIALLQTFIQNNYTGPAARLKAISGLFGKTGIEIGAVNTALSRSLAIMGQPAYEFMDDPLYLVLSLLLLERITGQKSLFDVTPDQEIPLPIISAESTPGLLAVAYWWWARALLTQLSLIPEPSGFQASVASAIYQSADLAYAITKELPESIHEDFKRELCAMYYLENVKCSLAINTEHLCLPSLTRAKKITNFEFVMTGARATRTKYQQKAHAGLIILAKSFTFQNFALRTTSATPETFALESDLLLEKPHFESIADEPLDEQIYSKRQKVDLNEGYEEDKLLPLALRQENIPKLLLDLNPNDQPTLSDYDNIQLLLRLYTIKNTTPAKDPLVEEELTALLSRILYQNGDKNWSIFARSLWERSIIETTKAKTIERGLLQMQSLVEELDLKIKSKLVPSSSEINVASRLSYIHQLPFIPRWQLDATLAEKYMSLGILKSAVEIYERLGMACETALCYAAVGDEKKAEEILLQRINENDSDARAYSILGDIKQDPSLWEKSWEIGKYVNAKNSLAKYYFNPPPKSGAQPNYSATLKHLNDSLRQYPLSFETWYFYGCVGLQCGKMQIAAEAFTRCVSLDPYHALSWSNLSAAYTKMDKLKEAYSCLKRAISCDAQKNWKIWENYMLVAVKLNEWEDVLTACKQLVSIRRDKSGEGSIDLPIIEKLVELLVTSEYPEEPQQLSYFQKSCTEFICNTLPQVITTSARCWRLVARVELWRKRPWAALECHEKAYRAISHNPDLEVEEKVWNDTVDACEDLVAAYESLGEMEGKYGPGSLVCKDWKYKCRSTIKALMSKGKGRWDDSPGWDRLVEARSQI</sequence>
<reference key="1">
    <citation type="journal article" date="1995" name="Yeast">
        <title>Sequencing analysis of a 24.7 kb fragment of yeast chromosome XIV identifies six known genes, a new member of the hexose transporter family and ten new open reading frames.</title>
        <authorList>
            <person name="Maftahi M."/>
            <person name="Nicaud J.-M."/>
            <person name="Levesque H."/>
            <person name="Gaillardin C."/>
        </authorList>
    </citation>
    <scope>NUCLEOTIDE SEQUENCE [GENOMIC DNA]</scope>
    <source>
        <strain>S288c / FY1676</strain>
    </source>
</reference>
<reference key="2">
    <citation type="journal article" date="1997" name="Nature">
        <title>The nucleotide sequence of Saccharomyces cerevisiae chromosome XIV and its evolutionary implications.</title>
        <authorList>
            <person name="Philippsen P."/>
            <person name="Kleine K."/>
            <person name="Poehlmann R."/>
            <person name="Duesterhoeft A."/>
            <person name="Hamberg K."/>
            <person name="Hegemann J.H."/>
            <person name="Obermaier B."/>
            <person name="Urrestarazu L.A."/>
            <person name="Aert R."/>
            <person name="Albermann K."/>
            <person name="Altmann R."/>
            <person name="Andre B."/>
            <person name="Baladron V."/>
            <person name="Ballesta J.P.G."/>
            <person name="Becam A.-M."/>
            <person name="Beinhauer J.D."/>
            <person name="Boskovic J."/>
            <person name="Buitrago M.J."/>
            <person name="Bussereau F."/>
            <person name="Coster F."/>
            <person name="Crouzet M."/>
            <person name="D'Angelo M."/>
            <person name="Dal Pero F."/>
            <person name="De Antoni A."/>
            <person name="del Rey F."/>
            <person name="Doignon F."/>
            <person name="Domdey H."/>
            <person name="Dubois E."/>
            <person name="Fiedler T.A."/>
            <person name="Fleig U."/>
            <person name="Floeth M."/>
            <person name="Fritz C."/>
            <person name="Gaillardin C."/>
            <person name="Garcia-Cantalejo J.M."/>
            <person name="Glansdorff N."/>
            <person name="Goffeau A."/>
            <person name="Gueldener U."/>
            <person name="Herbert C.J."/>
            <person name="Heumann K."/>
            <person name="Heuss-Neitzel D."/>
            <person name="Hilbert H."/>
            <person name="Hinni K."/>
            <person name="Iraqui Houssaini I."/>
            <person name="Jacquet M."/>
            <person name="Jimenez A."/>
            <person name="Jonniaux J.-L."/>
            <person name="Karpfinger-Hartl L."/>
            <person name="Lanfranchi G."/>
            <person name="Lepingle A."/>
            <person name="Levesque H."/>
            <person name="Lyck R."/>
            <person name="Maftahi M."/>
            <person name="Mallet L."/>
            <person name="Maurer C.T.C."/>
            <person name="Messenguy F."/>
            <person name="Mewes H.-W."/>
            <person name="Moestl D."/>
            <person name="Nasr F."/>
            <person name="Nicaud J.-M."/>
            <person name="Niedenthal R.K."/>
            <person name="Pandolfo D."/>
            <person name="Pierard A."/>
            <person name="Piravandi E."/>
            <person name="Planta R.J."/>
            <person name="Pohl T.M."/>
            <person name="Purnelle B."/>
            <person name="Rebischung C."/>
            <person name="Remacha M.A."/>
            <person name="Revuelta J.L."/>
            <person name="Rinke M."/>
            <person name="Saiz J.E."/>
            <person name="Sartorello F."/>
            <person name="Scherens B."/>
            <person name="Sen-Gupta M."/>
            <person name="Soler-Mira A."/>
            <person name="Urbanus J.H.M."/>
            <person name="Valle G."/>
            <person name="Van Dyck L."/>
            <person name="Verhasselt P."/>
            <person name="Vierendeels F."/>
            <person name="Vissers S."/>
            <person name="Voet M."/>
            <person name="Volckaert G."/>
            <person name="Wach A."/>
            <person name="Wambutt R."/>
            <person name="Wedler H."/>
            <person name="Zollner A."/>
            <person name="Hani J."/>
        </authorList>
    </citation>
    <scope>NUCLEOTIDE SEQUENCE [LARGE SCALE GENOMIC DNA]</scope>
    <source>
        <strain>ATCC 204508 / S288c</strain>
    </source>
</reference>
<reference key="3">
    <citation type="journal article" date="2014" name="G3 (Bethesda)">
        <title>The reference genome sequence of Saccharomyces cerevisiae: Then and now.</title>
        <authorList>
            <person name="Engel S.R."/>
            <person name="Dietrich F.S."/>
            <person name="Fisk D.G."/>
            <person name="Binkley G."/>
            <person name="Balakrishnan R."/>
            <person name="Costanzo M.C."/>
            <person name="Dwight S.S."/>
            <person name="Hitz B.C."/>
            <person name="Karra K."/>
            <person name="Nash R.S."/>
            <person name="Weng S."/>
            <person name="Wong E.D."/>
            <person name="Lloyd P."/>
            <person name="Skrzypek M.S."/>
            <person name="Miyasato S.R."/>
            <person name="Simison M."/>
            <person name="Cherry J.M."/>
        </authorList>
    </citation>
    <scope>GENOME REANNOTATION</scope>
    <source>
        <strain>ATCC 204508 / S288c</strain>
    </source>
</reference>
<reference key="4">
    <citation type="journal article" date="2001" name="Nature">
        <title>Genomic binding sites of the yeast cell-cycle transcription factors SBF and MBF.</title>
        <authorList>
            <person name="Iyer V.R."/>
            <person name="Horak C.E."/>
            <person name="Scafe C.S."/>
            <person name="Botstein D."/>
            <person name="Snyder M."/>
            <person name="Brown P.O."/>
        </authorList>
    </citation>
    <scope>INDUCTION</scope>
</reference>
<reference key="5">
    <citation type="journal article" date="2003" name="Mol. Cell">
        <title>Assigning function to yeast proteins by integration of technologies.</title>
        <authorList>
            <person name="Hazbun T.R."/>
            <person name="Malmstroem L."/>
            <person name="Anderson S."/>
            <person name="Graczyk B.J."/>
            <person name="Fox B."/>
            <person name="Riffle M."/>
            <person name="Sundin B.A."/>
            <person name="Aranda J.D."/>
            <person name="McDonald W.H."/>
            <person name="Chiu C.-H."/>
            <person name="Snydsman B.E."/>
            <person name="Bradley P."/>
            <person name="Muller E.G.D."/>
            <person name="Fields S."/>
            <person name="Baker D."/>
            <person name="Yates J.R. III"/>
            <person name="Davis T.N."/>
        </authorList>
    </citation>
    <scope>IDENTIFICATION BY MASS SPECTROMETRY</scope>
    <scope>SUBCELLULAR LOCATION [LARGE SCALE ANALYSIS]</scope>
</reference>
<reference key="6">
    <citation type="journal article" date="2003" name="Nature">
        <title>Global analysis of protein localization in budding yeast.</title>
        <authorList>
            <person name="Huh W.-K."/>
            <person name="Falvo J.V."/>
            <person name="Gerke L.C."/>
            <person name="Carroll A.S."/>
            <person name="Howson R.W."/>
            <person name="Weissman J.S."/>
            <person name="O'Shea E.K."/>
        </authorList>
    </citation>
    <scope>SUBCELLULAR LOCATION [LARGE SCALE ANALYSIS]</scope>
</reference>
<reference key="7">
    <citation type="journal article" date="2003" name="Nature">
        <title>Global analysis of protein expression in yeast.</title>
        <authorList>
            <person name="Ghaemmaghami S."/>
            <person name="Huh W.-K."/>
            <person name="Bower K."/>
            <person name="Howson R.W."/>
            <person name="Belle A."/>
            <person name="Dephoure N."/>
            <person name="O'Shea E.K."/>
            <person name="Weissman J.S."/>
        </authorList>
    </citation>
    <scope>LEVEL OF PROTEIN EXPRESSION [LARGE SCALE ANALYSIS]</scope>
</reference>
<reference key="8">
    <citation type="journal article" date="2011" name="Microbiology">
        <title>Emw1p/YNL313cp is essential for maintenance of the cell wall in Saccharomyces cerevisiae.</title>
        <authorList>
            <person name="Sipling T."/>
            <person name="Zhai C."/>
            <person name="Panaretou B."/>
        </authorList>
    </citation>
    <scope>FUNCTION</scope>
</reference>
<accession>P42842</accession>
<accession>D6W0N2</accession>